<reference key="1">
    <citation type="journal article" date="2004" name="Proc. Natl. Acad. Sci. U.S.A.">
        <title>Genome sequence of the deep-sea gamma-proteobacterium Idiomarina loihiensis reveals amino acid fermentation as a source of carbon and energy.</title>
        <authorList>
            <person name="Hou S."/>
            <person name="Saw J.H."/>
            <person name="Lee K.S."/>
            <person name="Freitas T.A."/>
            <person name="Belisle C."/>
            <person name="Kawarabayasi Y."/>
            <person name="Donachie S.P."/>
            <person name="Pikina A."/>
            <person name="Galperin M.Y."/>
            <person name="Koonin E.V."/>
            <person name="Makarova K.S."/>
            <person name="Omelchenko M.V."/>
            <person name="Sorokin A."/>
            <person name="Wolf Y.I."/>
            <person name="Li Q.X."/>
            <person name="Keum Y.S."/>
            <person name="Campbell S."/>
            <person name="Denery J."/>
            <person name="Aizawa S."/>
            <person name="Shibata S."/>
            <person name="Malahoff A."/>
            <person name="Alam M."/>
        </authorList>
    </citation>
    <scope>NUCLEOTIDE SEQUENCE [LARGE SCALE GENOMIC DNA]</scope>
    <source>
        <strain>ATCC BAA-735 / DSM 15497 / L2-TR</strain>
    </source>
</reference>
<dbReference type="EC" id="2.7.11.5" evidence="1"/>
<dbReference type="EC" id="3.1.3.-" evidence="1"/>
<dbReference type="EMBL" id="AE017340">
    <property type="protein sequence ID" value="AAV81448.1"/>
    <property type="molecule type" value="Genomic_DNA"/>
</dbReference>
<dbReference type="RefSeq" id="WP_011233863.1">
    <property type="nucleotide sequence ID" value="NC_006512.1"/>
</dbReference>
<dbReference type="SMR" id="Q5QWZ3"/>
<dbReference type="STRING" id="283942.IL0607"/>
<dbReference type="GeneID" id="41335758"/>
<dbReference type="KEGG" id="ilo:IL0607"/>
<dbReference type="eggNOG" id="COG4579">
    <property type="taxonomic scope" value="Bacteria"/>
</dbReference>
<dbReference type="HOGENOM" id="CLU_033804_1_1_6"/>
<dbReference type="OrthoDB" id="5287793at2"/>
<dbReference type="Proteomes" id="UP000001171">
    <property type="component" value="Chromosome"/>
</dbReference>
<dbReference type="GO" id="GO:0005737">
    <property type="term" value="C:cytoplasm"/>
    <property type="evidence" value="ECO:0007669"/>
    <property type="project" value="UniProtKB-SubCell"/>
</dbReference>
<dbReference type="GO" id="GO:0008772">
    <property type="term" value="F:[isocitrate dehydrogenase (NADP+)] kinase activity"/>
    <property type="evidence" value="ECO:0007669"/>
    <property type="project" value="UniProtKB-UniRule"/>
</dbReference>
<dbReference type="GO" id="GO:0016208">
    <property type="term" value="F:AMP binding"/>
    <property type="evidence" value="ECO:0007669"/>
    <property type="project" value="TreeGrafter"/>
</dbReference>
<dbReference type="GO" id="GO:0005524">
    <property type="term" value="F:ATP binding"/>
    <property type="evidence" value="ECO:0007669"/>
    <property type="project" value="UniProtKB-UniRule"/>
</dbReference>
<dbReference type="GO" id="GO:0004721">
    <property type="term" value="F:phosphoprotein phosphatase activity"/>
    <property type="evidence" value="ECO:0007669"/>
    <property type="project" value="UniProtKB-KW"/>
</dbReference>
<dbReference type="GO" id="GO:0004674">
    <property type="term" value="F:protein serine/threonine kinase activity"/>
    <property type="evidence" value="ECO:0007669"/>
    <property type="project" value="UniProtKB-KW"/>
</dbReference>
<dbReference type="GO" id="GO:0006006">
    <property type="term" value="P:glucose metabolic process"/>
    <property type="evidence" value="ECO:0007669"/>
    <property type="project" value="InterPro"/>
</dbReference>
<dbReference type="GO" id="GO:0006097">
    <property type="term" value="P:glyoxylate cycle"/>
    <property type="evidence" value="ECO:0007669"/>
    <property type="project" value="UniProtKB-UniRule"/>
</dbReference>
<dbReference type="GO" id="GO:0006099">
    <property type="term" value="P:tricarboxylic acid cycle"/>
    <property type="evidence" value="ECO:0007669"/>
    <property type="project" value="UniProtKB-UniRule"/>
</dbReference>
<dbReference type="HAMAP" id="MF_00747">
    <property type="entry name" value="AceK"/>
    <property type="match status" value="1"/>
</dbReference>
<dbReference type="InterPro" id="IPR046855">
    <property type="entry name" value="AceK_kinase"/>
</dbReference>
<dbReference type="InterPro" id="IPR046854">
    <property type="entry name" value="AceK_regulatory"/>
</dbReference>
<dbReference type="InterPro" id="IPR010452">
    <property type="entry name" value="Isocitrate_DH_AceK"/>
</dbReference>
<dbReference type="NCBIfam" id="NF002804">
    <property type="entry name" value="PRK02946.1"/>
    <property type="match status" value="1"/>
</dbReference>
<dbReference type="PANTHER" id="PTHR39559">
    <property type="match status" value="1"/>
</dbReference>
<dbReference type="PANTHER" id="PTHR39559:SF1">
    <property type="entry name" value="ISOCITRATE DEHYDROGENASE KINASE_PHOSPHATASE"/>
    <property type="match status" value="1"/>
</dbReference>
<dbReference type="Pfam" id="PF06315">
    <property type="entry name" value="AceK_kinase"/>
    <property type="match status" value="1"/>
</dbReference>
<dbReference type="Pfam" id="PF20423">
    <property type="entry name" value="AceK_regulatory"/>
    <property type="match status" value="1"/>
</dbReference>
<dbReference type="PIRSF" id="PIRSF000719">
    <property type="entry name" value="AceK"/>
    <property type="match status" value="1"/>
</dbReference>
<evidence type="ECO:0000255" key="1">
    <source>
        <dbReference type="HAMAP-Rule" id="MF_00747"/>
    </source>
</evidence>
<keyword id="KW-0067">ATP-binding</keyword>
<keyword id="KW-0963">Cytoplasm</keyword>
<keyword id="KW-0329">Glyoxylate bypass</keyword>
<keyword id="KW-0378">Hydrolase</keyword>
<keyword id="KW-0418">Kinase</keyword>
<keyword id="KW-0547">Nucleotide-binding</keyword>
<keyword id="KW-0904">Protein phosphatase</keyword>
<keyword id="KW-1185">Reference proteome</keyword>
<keyword id="KW-0723">Serine/threonine-protein kinase</keyword>
<keyword id="KW-0808">Transferase</keyword>
<keyword id="KW-0816">Tricarboxylic acid cycle</keyword>
<feature type="chain" id="PRO_0000288288" description="Isocitrate dehydrogenase kinase/phosphatase">
    <location>
        <begin position="1"/>
        <end position="564"/>
    </location>
</feature>
<feature type="active site" evidence="1">
    <location>
        <position position="371"/>
    </location>
</feature>
<feature type="binding site" evidence="1">
    <location>
        <begin position="315"/>
        <end position="321"/>
    </location>
    <ligand>
        <name>ATP</name>
        <dbReference type="ChEBI" id="CHEBI:30616"/>
    </ligand>
</feature>
<feature type="binding site" evidence="1">
    <location>
        <position position="336"/>
    </location>
    <ligand>
        <name>ATP</name>
        <dbReference type="ChEBI" id="CHEBI:30616"/>
    </ligand>
</feature>
<protein>
    <recommendedName>
        <fullName evidence="1">Isocitrate dehydrogenase kinase/phosphatase</fullName>
        <shortName evidence="1">IDH kinase/phosphatase</shortName>
        <shortName evidence="1">IDHK/P</shortName>
        <ecNumber evidence="1">2.7.11.5</ecNumber>
        <ecNumber evidence="1">3.1.3.-</ecNumber>
    </recommendedName>
</protein>
<sequence length="564" mass="65928">MTISPETLAKSILDGFHSHYRRFQVLTQGARERFLKRDWTAVVSAASERIHYYDHQVGTTAKKVERRVGTELDEGLWLATRQRYQQLLKFHPQAELAETFYNSVFCRVFDRAYFNNDYIFVETVLANHIPVPVENECHSYFPVVDGLEGTLTRVFEDIGLGGEFENFENDIEQLRDKFFERATETDIEAHNLRIDVLKSPFYRNKAAYIVGRVVTENNHYPFIVPVLINSQGKLYVDAFITRSDRMATIFGFARSYFMVETEAPSALVRFLKDLMPHKTLAELYSSVGFHKQGKTEFYREFLHHLRRTDDQLSAAPGVKGMVMTVFTLPSFPYVFKVIKDRLGGTKEFGRQTVIDRYRMVKRHDRVGRMADTLEFVDVALPLKRISADLLDEFKQTIANSISIEGDTLVIHQLFVERRMTPLNLYLEYANDEEVDAAMDDYGRALKEMMAANIFPGDMLLKNFGVTRHKRVVFYDYDEVRYLTDMSFRRLPENDWEVSYAPDDVFPQQLAQFAVPQAKYRNKLLKRHPELIDSAYWCRVQKNIRKGELTDVFPYDADLRFTRRF</sequence>
<proteinExistence type="inferred from homology"/>
<name>ACEK_IDILO</name>
<accession>Q5QWZ3</accession>
<organism>
    <name type="scientific">Idiomarina loihiensis (strain ATCC BAA-735 / DSM 15497 / L2-TR)</name>
    <dbReference type="NCBI Taxonomy" id="283942"/>
    <lineage>
        <taxon>Bacteria</taxon>
        <taxon>Pseudomonadati</taxon>
        <taxon>Pseudomonadota</taxon>
        <taxon>Gammaproteobacteria</taxon>
        <taxon>Alteromonadales</taxon>
        <taxon>Idiomarinaceae</taxon>
        <taxon>Idiomarina</taxon>
    </lineage>
</organism>
<comment type="function">
    <text evidence="1">Bifunctional enzyme which can phosphorylate or dephosphorylate isocitrate dehydrogenase (IDH) on a specific serine residue. This is a regulatory mechanism which enables bacteria to bypass the Krebs cycle via the glyoxylate shunt in response to the source of carbon. When bacteria are grown on glucose, IDH is fully active and unphosphorylated, but when grown on acetate or ethanol, the activity of IDH declines drastically concomitant with its phosphorylation.</text>
</comment>
<comment type="catalytic activity">
    <reaction evidence="1">
        <text>L-seryl-[isocitrate dehydrogenase] + ATP = O-phospho-L-seryl-[isocitrate dehydrogenase] + ADP + H(+)</text>
        <dbReference type="Rhea" id="RHEA:43540"/>
        <dbReference type="Rhea" id="RHEA-COMP:10605"/>
        <dbReference type="Rhea" id="RHEA-COMP:10606"/>
        <dbReference type="ChEBI" id="CHEBI:15378"/>
        <dbReference type="ChEBI" id="CHEBI:29999"/>
        <dbReference type="ChEBI" id="CHEBI:30616"/>
        <dbReference type="ChEBI" id="CHEBI:83421"/>
        <dbReference type="ChEBI" id="CHEBI:456216"/>
        <dbReference type="EC" id="2.7.11.5"/>
    </reaction>
</comment>
<comment type="subcellular location">
    <subcellularLocation>
        <location evidence="1">Cytoplasm</location>
    </subcellularLocation>
</comment>
<comment type="similarity">
    <text evidence="1">Belongs to the AceK family.</text>
</comment>
<gene>
    <name evidence="1" type="primary">aceK</name>
    <name type="ordered locus">IL0607</name>
</gene>